<gene>
    <name evidence="1" type="primary">dnaK</name>
    <name type="ordered locus">PSPA7_5481</name>
</gene>
<organism>
    <name type="scientific">Pseudomonas paraeruginosa (strain DSM 24068 / PA7)</name>
    <name type="common">Pseudomonas aeruginosa (strain PA7)</name>
    <dbReference type="NCBI Taxonomy" id="381754"/>
    <lineage>
        <taxon>Bacteria</taxon>
        <taxon>Pseudomonadati</taxon>
        <taxon>Pseudomonadota</taxon>
        <taxon>Gammaproteobacteria</taxon>
        <taxon>Pseudomonadales</taxon>
        <taxon>Pseudomonadaceae</taxon>
        <taxon>Pseudomonas</taxon>
        <taxon>Pseudomonas paraeruginosa</taxon>
    </lineage>
</organism>
<keyword id="KW-0067">ATP-binding</keyword>
<keyword id="KW-0143">Chaperone</keyword>
<keyword id="KW-0547">Nucleotide-binding</keyword>
<keyword id="KW-0597">Phosphoprotein</keyword>
<keyword id="KW-0346">Stress response</keyword>
<comment type="function">
    <text evidence="1">Acts as a chaperone.</text>
</comment>
<comment type="induction">
    <text evidence="1">By stress conditions e.g. heat shock.</text>
</comment>
<comment type="similarity">
    <text evidence="1">Belongs to the heat shock protein 70 family.</text>
</comment>
<name>DNAK_PSEP7</name>
<reference key="1">
    <citation type="submission" date="2007-06" db="EMBL/GenBank/DDBJ databases">
        <authorList>
            <person name="Dodson R.J."/>
            <person name="Harkins D."/>
            <person name="Paulsen I.T."/>
        </authorList>
    </citation>
    <scope>NUCLEOTIDE SEQUENCE [LARGE SCALE GENOMIC DNA]</scope>
    <source>
        <strain>DSM 24068 / PA7</strain>
    </source>
</reference>
<proteinExistence type="inferred from homology"/>
<dbReference type="EMBL" id="CP000744">
    <property type="protein sequence ID" value="ABR86569.1"/>
    <property type="molecule type" value="Genomic_DNA"/>
</dbReference>
<dbReference type="RefSeq" id="WP_012077495.1">
    <property type="nucleotide sequence ID" value="NC_009656.1"/>
</dbReference>
<dbReference type="SMR" id="A6VCL8"/>
<dbReference type="GeneID" id="77223298"/>
<dbReference type="KEGG" id="pap:PSPA7_5481"/>
<dbReference type="HOGENOM" id="CLU_005965_2_1_6"/>
<dbReference type="Proteomes" id="UP000001582">
    <property type="component" value="Chromosome"/>
</dbReference>
<dbReference type="GO" id="GO:0005524">
    <property type="term" value="F:ATP binding"/>
    <property type="evidence" value="ECO:0007669"/>
    <property type="project" value="UniProtKB-UniRule"/>
</dbReference>
<dbReference type="GO" id="GO:0140662">
    <property type="term" value="F:ATP-dependent protein folding chaperone"/>
    <property type="evidence" value="ECO:0007669"/>
    <property type="project" value="InterPro"/>
</dbReference>
<dbReference type="GO" id="GO:0051082">
    <property type="term" value="F:unfolded protein binding"/>
    <property type="evidence" value="ECO:0007669"/>
    <property type="project" value="InterPro"/>
</dbReference>
<dbReference type="CDD" id="cd10234">
    <property type="entry name" value="ASKHA_NBD_HSP70_DnaK-like"/>
    <property type="match status" value="1"/>
</dbReference>
<dbReference type="FunFam" id="2.60.34.10:FF:000014">
    <property type="entry name" value="Chaperone protein DnaK HSP70"/>
    <property type="match status" value="1"/>
</dbReference>
<dbReference type="FunFam" id="1.20.1270.10:FF:000001">
    <property type="entry name" value="Molecular chaperone DnaK"/>
    <property type="match status" value="1"/>
</dbReference>
<dbReference type="FunFam" id="3.30.420.40:FF:000004">
    <property type="entry name" value="Molecular chaperone DnaK"/>
    <property type="match status" value="1"/>
</dbReference>
<dbReference type="FunFam" id="3.90.640.10:FF:000003">
    <property type="entry name" value="Molecular chaperone DnaK"/>
    <property type="match status" value="1"/>
</dbReference>
<dbReference type="Gene3D" id="1.20.1270.10">
    <property type="match status" value="1"/>
</dbReference>
<dbReference type="Gene3D" id="3.30.420.40">
    <property type="match status" value="2"/>
</dbReference>
<dbReference type="Gene3D" id="3.90.640.10">
    <property type="entry name" value="Actin, Chain A, domain 4"/>
    <property type="match status" value="1"/>
</dbReference>
<dbReference type="Gene3D" id="2.60.34.10">
    <property type="entry name" value="Substrate Binding Domain Of DNAk, Chain A, domain 1"/>
    <property type="match status" value="1"/>
</dbReference>
<dbReference type="HAMAP" id="MF_00332">
    <property type="entry name" value="DnaK"/>
    <property type="match status" value="1"/>
</dbReference>
<dbReference type="InterPro" id="IPR043129">
    <property type="entry name" value="ATPase_NBD"/>
</dbReference>
<dbReference type="InterPro" id="IPR012725">
    <property type="entry name" value="Chaperone_DnaK"/>
</dbReference>
<dbReference type="InterPro" id="IPR018181">
    <property type="entry name" value="Heat_shock_70_CS"/>
</dbReference>
<dbReference type="InterPro" id="IPR029048">
    <property type="entry name" value="HSP70_C_sf"/>
</dbReference>
<dbReference type="InterPro" id="IPR029047">
    <property type="entry name" value="HSP70_peptide-bd_sf"/>
</dbReference>
<dbReference type="InterPro" id="IPR013126">
    <property type="entry name" value="Hsp_70_fam"/>
</dbReference>
<dbReference type="NCBIfam" id="NF001413">
    <property type="entry name" value="PRK00290.1"/>
    <property type="match status" value="1"/>
</dbReference>
<dbReference type="NCBIfam" id="NF003520">
    <property type="entry name" value="PRK05183.1"/>
    <property type="match status" value="1"/>
</dbReference>
<dbReference type="NCBIfam" id="TIGR02350">
    <property type="entry name" value="prok_dnaK"/>
    <property type="match status" value="1"/>
</dbReference>
<dbReference type="PANTHER" id="PTHR19375">
    <property type="entry name" value="HEAT SHOCK PROTEIN 70KDA"/>
    <property type="match status" value="1"/>
</dbReference>
<dbReference type="Pfam" id="PF00012">
    <property type="entry name" value="HSP70"/>
    <property type="match status" value="1"/>
</dbReference>
<dbReference type="PRINTS" id="PR00301">
    <property type="entry name" value="HEATSHOCK70"/>
</dbReference>
<dbReference type="SUPFAM" id="SSF53067">
    <property type="entry name" value="Actin-like ATPase domain"/>
    <property type="match status" value="2"/>
</dbReference>
<dbReference type="SUPFAM" id="SSF100934">
    <property type="entry name" value="Heat shock protein 70kD (HSP70), C-terminal subdomain"/>
    <property type="match status" value="1"/>
</dbReference>
<dbReference type="SUPFAM" id="SSF100920">
    <property type="entry name" value="Heat shock protein 70kD (HSP70), peptide-binding domain"/>
    <property type="match status" value="1"/>
</dbReference>
<dbReference type="PROSITE" id="PS00297">
    <property type="entry name" value="HSP70_1"/>
    <property type="match status" value="1"/>
</dbReference>
<dbReference type="PROSITE" id="PS00329">
    <property type="entry name" value="HSP70_2"/>
    <property type="match status" value="1"/>
</dbReference>
<dbReference type="PROSITE" id="PS01036">
    <property type="entry name" value="HSP70_3"/>
    <property type="match status" value="1"/>
</dbReference>
<sequence length="637" mass="68333">MGKIIGIDLGTTNSCVAILENGNVKVIENAEGARTTPSIIAYTNDGETLVGQPAKRQAVTNPQNTLYAVKRLIGRRFEENVVQKDIQMVPYSIVKADNGDAWVEVKGQKMAPPQISAEVLKKMKKTAEDYLGEPVTEAVITVPAYFNDSQRQATKDAGRIAGLDVKRIINEPTAAALAYGLDKAKGDHTVIVYDLGGGTFDVSVIEIAEVDGEHQFEVLATNGDTFLGGEDFDIRLIDYLVDEFKKESGINLKGDPLAMQRLKEAAEKAKIELSSTQQTDVNLPYVTADASGPKHLNVKVSRAKLESLVEDLVQRTIEPCRTALKDAGLDVSDIHEVILVGGQTRMPLVQKTVAEFFGKEARKDVNPDEAVAVGAAIQGAVLAGDVKDVLLLDVTPLTLGIETLGGVMTGLIEKNTTIPTKKSQVFSTADDNQGAVTIHVLQGERKQAAQNKSLGKFDLADIPPAPRGVPQIEVTFDIDANGILHVSAKDKATGKQQSIVIKASSGLSEDEIQQMVRDAEANAEEDRKFEELAAARNQGDALVHATRKMITEAGDKATAEDKATIEKALGELEVAVKGDDKAEIEAKMNALSQASAPLAQKMYAEQAQQGEGAAQGEQAKSADDVVDAEFEEVKDNK</sequence>
<accession>A6VCL8</accession>
<feature type="chain" id="PRO_1000059631" description="Chaperone protein DnaK">
    <location>
        <begin position="1"/>
        <end position="637"/>
    </location>
</feature>
<feature type="region of interest" description="Disordered" evidence="2">
    <location>
        <begin position="604"/>
        <end position="637"/>
    </location>
</feature>
<feature type="compositionally biased region" description="Low complexity" evidence="2">
    <location>
        <begin position="604"/>
        <end position="619"/>
    </location>
</feature>
<feature type="modified residue" description="Phosphothreonine; by autocatalysis" evidence="1">
    <location>
        <position position="199"/>
    </location>
</feature>
<protein>
    <recommendedName>
        <fullName evidence="1">Chaperone protein DnaK</fullName>
    </recommendedName>
    <alternativeName>
        <fullName evidence="1">HSP70</fullName>
    </alternativeName>
    <alternativeName>
        <fullName evidence="1">Heat shock 70 kDa protein</fullName>
    </alternativeName>
    <alternativeName>
        <fullName evidence="1">Heat shock protein 70</fullName>
    </alternativeName>
</protein>
<evidence type="ECO:0000255" key="1">
    <source>
        <dbReference type="HAMAP-Rule" id="MF_00332"/>
    </source>
</evidence>
<evidence type="ECO:0000256" key="2">
    <source>
        <dbReference type="SAM" id="MobiDB-lite"/>
    </source>
</evidence>